<sequence>MRERGLGEEEIFAELCEARSRDVPYGRVLSSMCTNPHPIAVKAHQEFVNTNLGDPKLFPGTADIEHRCIGLIGDLLHLPAATGYISTGGTESNIQALRTAIQMKHTDRRRANIVVPESAHYSFEKASQMLGIAIRRAPLDDLLRADPSEMAALIDKNTIALVAVAGTTEFGQIDPIEEIGRLAQEHDLYLHVDAAFGGFVIPFMDRPAKFDFEIPGVQSITIDPHKMGLSTIPSGGLLYRSESLMKVLEINAQYLTSMVQTSLAGTRSGASAASAYAVLQYLGRAGYREIVATCMENTRILREQLEDMGMEPIIEPVLNIVTARAKDPVGLRKKLAEKNWYVSTTVHPCALRMVVMPHVTADVIEAFTADLKKVI</sequence>
<proteinExistence type="inferred from homology"/>
<comment type="function">
    <text evidence="1">Catalyzes the decarboxylation of L-tyrosine to produce tyramine for methanofuran biosynthesis. Can also catalyze the decarboxylation of L-aspartate to produce beta-alanine for coenzyme A (CoA) biosynthesis.</text>
</comment>
<comment type="catalytic activity">
    <reaction evidence="1">
        <text>L-tyrosine + H(+) = tyramine + CO2</text>
        <dbReference type="Rhea" id="RHEA:14345"/>
        <dbReference type="ChEBI" id="CHEBI:15378"/>
        <dbReference type="ChEBI" id="CHEBI:16526"/>
        <dbReference type="ChEBI" id="CHEBI:58315"/>
        <dbReference type="ChEBI" id="CHEBI:327995"/>
        <dbReference type="EC" id="4.1.1.25"/>
    </reaction>
</comment>
<comment type="catalytic activity">
    <reaction evidence="1">
        <text>L-aspartate + H(+) = beta-alanine + CO2</text>
        <dbReference type="Rhea" id="RHEA:19497"/>
        <dbReference type="ChEBI" id="CHEBI:15378"/>
        <dbReference type="ChEBI" id="CHEBI:16526"/>
        <dbReference type="ChEBI" id="CHEBI:29991"/>
        <dbReference type="ChEBI" id="CHEBI:57966"/>
        <dbReference type="EC" id="4.1.1.11"/>
    </reaction>
</comment>
<comment type="cofactor">
    <cofactor evidence="1">
        <name>pyridoxal 5'-phosphate</name>
        <dbReference type="ChEBI" id="CHEBI:597326"/>
    </cofactor>
</comment>
<comment type="pathway">
    <text evidence="1">Cofactor biosynthesis; methanofuran biosynthesis.</text>
</comment>
<comment type="pathway">
    <text evidence="1">Cofactor biosynthesis; coenzyme A biosynthesis.</text>
</comment>
<comment type="similarity">
    <text evidence="1">Belongs to the group II decarboxylase family. MfnA subfamily.</text>
</comment>
<gene>
    <name evidence="1" type="primary">mfnA</name>
    <name type="ordered locus">UNCMA_14340</name>
    <name type="ORF">RCIX1543</name>
</gene>
<evidence type="ECO:0000255" key="1">
    <source>
        <dbReference type="HAMAP-Rule" id="MF_01610"/>
    </source>
</evidence>
<reference key="1">
    <citation type="journal article" date="2006" name="Science">
        <title>Genome of rice cluster I archaea -- the key methane producers in the rice rhizosphere.</title>
        <authorList>
            <person name="Erkel C."/>
            <person name="Kube M."/>
            <person name="Reinhardt R."/>
            <person name="Liesack W."/>
        </authorList>
    </citation>
    <scope>NUCLEOTIDE SEQUENCE [LARGE SCALE GENOMIC DNA]</scope>
    <source>
        <strain>DSM 22066 / NBRC 105507 / MRE50</strain>
    </source>
</reference>
<feature type="chain" id="PRO_0000293191" description="Probable L-tyrosine/L-aspartate decarboxylase">
    <location>
        <begin position="1"/>
        <end position="375"/>
    </location>
</feature>
<feature type="modified residue" description="N6-(pyridoxal phosphate)lysine" evidence="1">
    <location>
        <position position="226"/>
    </location>
</feature>
<keyword id="KW-0210">Decarboxylase</keyword>
<keyword id="KW-0456">Lyase</keyword>
<keyword id="KW-0663">Pyridoxal phosphate</keyword>
<keyword id="KW-1185">Reference proteome</keyword>
<accession>Q0W498</accession>
<protein>
    <recommendedName>
        <fullName evidence="1">Probable L-tyrosine/L-aspartate decarboxylase</fullName>
        <shortName evidence="1">TDC/ADC</shortName>
        <ecNumber evidence="1">4.1.1.11</ecNumber>
        <ecNumber evidence="1">4.1.1.25</ecNumber>
    </recommendedName>
</protein>
<name>MFNA_METAR</name>
<organism>
    <name type="scientific">Methanocella arvoryzae (strain DSM 22066 / NBRC 105507 / MRE50)</name>
    <dbReference type="NCBI Taxonomy" id="351160"/>
    <lineage>
        <taxon>Archaea</taxon>
        <taxon>Methanobacteriati</taxon>
        <taxon>Methanobacteriota</taxon>
        <taxon>Stenosarchaea group</taxon>
        <taxon>Methanomicrobia</taxon>
        <taxon>Methanocellales</taxon>
        <taxon>Methanocellaceae</taxon>
        <taxon>Methanocella</taxon>
    </lineage>
</organism>
<dbReference type="EC" id="4.1.1.11" evidence="1"/>
<dbReference type="EC" id="4.1.1.25" evidence="1"/>
<dbReference type="EMBL" id="AM114193">
    <property type="protein sequence ID" value="CAJ36795.1"/>
    <property type="molecule type" value="Genomic_DNA"/>
</dbReference>
<dbReference type="RefSeq" id="WP_012035762.1">
    <property type="nucleotide sequence ID" value="NC_009464.1"/>
</dbReference>
<dbReference type="SMR" id="Q0W498"/>
<dbReference type="STRING" id="351160.RCIX1543"/>
<dbReference type="GeneID" id="5142888"/>
<dbReference type="KEGG" id="rci:RCIX1543"/>
<dbReference type="PATRIC" id="fig|351160.9.peg.1479"/>
<dbReference type="eggNOG" id="arCOG00027">
    <property type="taxonomic scope" value="Archaea"/>
</dbReference>
<dbReference type="OrthoDB" id="56891at2157"/>
<dbReference type="UniPathway" id="UPA00080"/>
<dbReference type="UniPathway" id="UPA00241"/>
<dbReference type="Proteomes" id="UP000000663">
    <property type="component" value="Chromosome"/>
</dbReference>
<dbReference type="GO" id="GO:0004068">
    <property type="term" value="F:aspartate 1-decarboxylase activity"/>
    <property type="evidence" value="ECO:0007669"/>
    <property type="project" value="UniProtKB-UniRule"/>
</dbReference>
<dbReference type="GO" id="GO:0030170">
    <property type="term" value="F:pyridoxal phosphate binding"/>
    <property type="evidence" value="ECO:0007669"/>
    <property type="project" value="UniProtKB-UniRule"/>
</dbReference>
<dbReference type="GO" id="GO:0004837">
    <property type="term" value="F:tyrosine decarboxylase activity"/>
    <property type="evidence" value="ECO:0007669"/>
    <property type="project" value="UniProtKB-UniRule"/>
</dbReference>
<dbReference type="GO" id="GO:0019752">
    <property type="term" value="P:carboxylic acid metabolic process"/>
    <property type="evidence" value="ECO:0007669"/>
    <property type="project" value="InterPro"/>
</dbReference>
<dbReference type="GO" id="GO:0015937">
    <property type="term" value="P:coenzyme A biosynthetic process"/>
    <property type="evidence" value="ECO:0007669"/>
    <property type="project" value="UniProtKB-UniRule"/>
</dbReference>
<dbReference type="GO" id="GO:2001120">
    <property type="term" value="P:methanofuran biosynthetic process"/>
    <property type="evidence" value="ECO:0007669"/>
    <property type="project" value="UniProtKB-UniRule"/>
</dbReference>
<dbReference type="Gene3D" id="3.90.1150.10">
    <property type="entry name" value="Aspartate Aminotransferase, domain 1"/>
    <property type="match status" value="1"/>
</dbReference>
<dbReference type="Gene3D" id="3.40.640.10">
    <property type="entry name" value="Type I PLP-dependent aspartate aminotransferase-like (Major domain)"/>
    <property type="match status" value="1"/>
</dbReference>
<dbReference type="HAMAP" id="MF_01610">
    <property type="entry name" value="MfnA_decarbox"/>
    <property type="match status" value="1"/>
</dbReference>
<dbReference type="InterPro" id="IPR050477">
    <property type="entry name" value="GrpII_AminoAcid_Decarb"/>
</dbReference>
<dbReference type="InterPro" id="IPR020931">
    <property type="entry name" value="MfnA"/>
</dbReference>
<dbReference type="InterPro" id="IPR002129">
    <property type="entry name" value="PyrdxlP-dep_de-COase"/>
</dbReference>
<dbReference type="InterPro" id="IPR015424">
    <property type="entry name" value="PyrdxlP-dep_Trfase"/>
</dbReference>
<dbReference type="InterPro" id="IPR015421">
    <property type="entry name" value="PyrdxlP-dep_Trfase_major"/>
</dbReference>
<dbReference type="InterPro" id="IPR015422">
    <property type="entry name" value="PyrdxlP-dep_Trfase_small"/>
</dbReference>
<dbReference type="NCBIfam" id="TIGR03812">
    <property type="entry name" value="tyr_de_CO2_Arch"/>
    <property type="match status" value="1"/>
</dbReference>
<dbReference type="PANTHER" id="PTHR42735">
    <property type="match status" value="1"/>
</dbReference>
<dbReference type="PANTHER" id="PTHR42735:SF6">
    <property type="entry name" value="SPHINGOSINE-1-PHOSPHATE LYASE 1"/>
    <property type="match status" value="1"/>
</dbReference>
<dbReference type="Pfam" id="PF00282">
    <property type="entry name" value="Pyridoxal_deC"/>
    <property type="match status" value="1"/>
</dbReference>
<dbReference type="SUPFAM" id="SSF53383">
    <property type="entry name" value="PLP-dependent transferases"/>
    <property type="match status" value="1"/>
</dbReference>